<proteinExistence type="inferred from homology"/>
<dbReference type="EC" id="2.7.7.38" evidence="1"/>
<dbReference type="EMBL" id="AE017197">
    <property type="protein sequence ID" value="AAU03847.1"/>
    <property type="molecule type" value="Genomic_DNA"/>
</dbReference>
<dbReference type="SMR" id="Q68WZ5"/>
<dbReference type="KEGG" id="rty:RT0368"/>
<dbReference type="eggNOG" id="COG1212">
    <property type="taxonomic scope" value="Bacteria"/>
</dbReference>
<dbReference type="HOGENOM" id="CLU_065038_0_1_5"/>
<dbReference type="OrthoDB" id="9815559at2"/>
<dbReference type="UniPathway" id="UPA00030"/>
<dbReference type="UniPathway" id="UPA00358">
    <property type="reaction ID" value="UER00476"/>
</dbReference>
<dbReference type="Proteomes" id="UP000000604">
    <property type="component" value="Chromosome"/>
</dbReference>
<dbReference type="GO" id="GO:0005829">
    <property type="term" value="C:cytosol"/>
    <property type="evidence" value="ECO:0007669"/>
    <property type="project" value="TreeGrafter"/>
</dbReference>
<dbReference type="GO" id="GO:0008690">
    <property type="term" value="F:3-deoxy-manno-octulosonate cytidylyltransferase activity"/>
    <property type="evidence" value="ECO:0007669"/>
    <property type="project" value="UniProtKB-UniRule"/>
</dbReference>
<dbReference type="GO" id="GO:0033468">
    <property type="term" value="P:CMP-keto-3-deoxy-D-manno-octulosonic acid biosynthetic process"/>
    <property type="evidence" value="ECO:0007669"/>
    <property type="project" value="UniProtKB-UniRule"/>
</dbReference>
<dbReference type="GO" id="GO:0009103">
    <property type="term" value="P:lipopolysaccharide biosynthetic process"/>
    <property type="evidence" value="ECO:0007669"/>
    <property type="project" value="UniProtKB-UniRule"/>
</dbReference>
<dbReference type="CDD" id="cd02517">
    <property type="entry name" value="CMP-KDO-Synthetase"/>
    <property type="match status" value="1"/>
</dbReference>
<dbReference type="Gene3D" id="3.90.550.10">
    <property type="entry name" value="Spore Coat Polysaccharide Biosynthesis Protein SpsA, Chain A"/>
    <property type="match status" value="1"/>
</dbReference>
<dbReference type="HAMAP" id="MF_00057">
    <property type="entry name" value="KdsB"/>
    <property type="match status" value="1"/>
</dbReference>
<dbReference type="InterPro" id="IPR003329">
    <property type="entry name" value="Cytidylyl_trans"/>
</dbReference>
<dbReference type="InterPro" id="IPR004528">
    <property type="entry name" value="KdsB"/>
</dbReference>
<dbReference type="InterPro" id="IPR029044">
    <property type="entry name" value="Nucleotide-diphossugar_trans"/>
</dbReference>
<dbReference type="NCBIfam" id="TIGR00466">
    <property type="entry name" value="kdsB"/>
    <property type="match status" value="1"/>
</dbReference>
<dbReference type="NCBIfam" id="NF003948">
    <property type="entry name" value="PRK05450.1-1"/>
    <property type="match status" value="1"/>
</dbReference>
<dbReference type="NCBIfam" id="NF003952">
    <property type="entry name" value="PRK05450.1-5"/>
    <property type="match status" value="1"/>
</dbReference>
<dbReference type="PANTHER" id="PTHR42866">
    <property type="entry name" value="3-DEOXY-MANNO-OCTULOSONATE CYTIDYLYLTRANSFERASE"/>
    <property type="match status" value="1"/>
</dbReference>
<dbReference type="PANTHER" id="PTHR42866:SF2">
    <property type="entry name" value="3-DEOXY-MANNO-OCTULOSONATE CYTIDYLYLTRANSFERASE, MITOCHONDRIAL"/>
    <property type="match status" value="1"/>
</dbReference>
<dbReference type="Pfam" id="PF02348">
    <property type="entry name" value="CTP_transf_3"/>
    <property type="match status" value="1"/>
</dbReference>
<dbReference type="SUPFAM" id="SSF53448">
    <property type="entry name" value="Nucleotide-diphospho-sugar transferases"/>
    <property type="match status" value="1"/>
</dbReference>
<evidence type="ECO:0000255" key="1">
    <source>
        <dbReference type="HAMAP-Rule" id="MF_00057"/>
    </source>
</evidence>
<sequence>MKNQNVAIIIPSRLNSTRLIQKPLQLIGSITLIERVFKQVNKANIQHTYVATDSEEIANIIKKIGGKVILTDSDIPTGTDRTYEAFKLIPNNNNIHYIINVQGDIPFIEHRSILKIIEYLKNSEYDIVTPVVRVDRESIEASSNVTVAVDYMGKALYFSRSLIPHGAEELLYHLGIYGFRKNALEKFVSLKQTFLEKTERLEQLRILENGMTIGTCLVEDVPISVDTEEDLKKAIKFCREN</sequence>
<reference key="1">
    <citation type="journal article" date="2004" name="J. Bacteriol.">
        <title>Complete genome sequence of Rickettsia typhi and comparison with sequences of other Rickettsiae.</title>
        <authorList>
            <person name="McLeod M.P."/>
            <person name="Qin X."/>
            <person name="Karpathy S.E."/>
            <person name="Gioia J."/>
            <person name="Highlander S.K."/>
            <person name="Fox G.E."/>
            <person name="McNeill T.Z."/>
            <person name="Jiang H."/>
            <person name="Muzny D."/>
            <person name="Jacob L.S."/>
            <person name="Hawes A.C."/>
            <person name="Sodergren E."/>
            <person name="Gill R."/>
            <person name="Hume J."/>
            <person name="Morgan M."/>
            <person name="Fan G."/>
            <person name="Amin A.G."/>
            <person name="Gibbs R.A."/>
            <person name="Hong C."/>
            <person name="Yu X.-J."/>
            <person name="Walker D.H."/>
            <person name="Weinstock G.M."/>
        </authorList>
    </citation>
    <scope>NUCLEOTIDE SEQUENCE [LARGE SCALE GENOMIC DNA]</scope>
    <source>
        <strain>ATCC VR-144 / Wilmington</strain>
    </source>
</reference>
<feature type="chain" id="PRO_0000274835" description="3-deoxy-manno-octulosonate cytidylyltransferase">
    <location>
        <begin position="1"/>
        <end position="241"/>
    </location>
</feature>
<name>KDSB_RICTY</name>
<organism>
    <name type="scientific">Rickettsia typhi (strain ATCC VR-144 / Wilmington)</name>
    <dbReference type="NCBI Taxonomy" id="257363"/>
    <lineage>
        <taxon>Bacteria</taxon>
        <taxon>Pseudomonadati</taxon>
        <taxon>Pseudomonadota</taxon>
        <taxon>Alphaproteobacteria</taxon>
        <taxon>Rickettsiales</taxon>
        <taxon>Rickettsiaceae</taxon>
        <taxon>Rickettsieae</taxon>
        <taxon>Rickettsia</taxon>
        <taxon>typhus group</taxon>
    </lineage>
</organism>
<keyword id="KW-0963">Cytoplasm</keyword>
<keyword id="KW-0448">Lipopolysaccharide biosynthesis</keyword>
<keyword id="KW-0548">Nucleotidyltransferase</keyword>
<keyword id="KW-0808">Transferase</keyword>
<gene>
    <name evidence="1" type="primary">kdsB</name>
    <name type="ordered locus">RT0368</name>
</gene>
<comment type="function">
    <text evidence="1">Activates KDO (a required 8-carbon sugar) for incorporation into bacterial lipopolysaccharide in Gram-negative bacteria.</text>
</comment>
<comment type="catalytic activity">
    <reaction evidence="1">
        <text>3-deoxy-alpha-D-manno-oct-2-ulosonate + CTP = CMP-3-deoxy-beta-D-manno-octulosonate + diphosphate</text>
        <dbReference type="Rhea" id="RHEA:23448"/>
        <dbReference type="ChEBI" id="CHEBI:33019"/>
        <dbReference type="ChEBI" id="CHEBI:37563"/>
        <dbReference type="ChEBI" id="CHEBI:85986"/>
        <dbReference type="ChEBI" id="CHEBI:85987"/>
        <dbReference type="EC" id="2.7.7.38"/>
    </reaction>
</comment>
<comment type="pathway">
    <text evidence="1">Nucleotide-sugar biosynthesis; CMP-3-deoxy-D-manno-octulosonate biosynthesis; CMP-3-deoxy-D-manno-octulosonate from 3-deoxy-D-manno-octulosonate and CTP: step 1/1.</text>
</comment>
<comment type="pathway">
    <text evidence="1">Bacterial outer membrane biogenesis; lipopolysaccharide biosynthesis.</text>
</comment>
<comment type="subcellular location">
    <subcellularLocation>
        <location evidence="1">Cytoplasm</location>
    </subcellularLocation>
</comment>
<comment type="similarity">
    <text evidence="1">Belongs to the KdsB family.</text>
</comment>
<accession>Q68WZ5</accession>
<protein>
    <recommendedName>
        <fullName evidence="1">3-deoxy-manno-octulosonate cytidylyltransferase</fullName>
        <ecNumber evidence="1">2.7.7.38</ecNumber>
    </recommendedName>
    <alternativeName>
        <fullName evidence="1">CMP-2-keto-3-deoxyoctulosonic acid synthase</fullName>
        <shortName evidence="1">CKS</shortName>
        <shortName evidence="1">CMP-KDO synthase</shortName>
    </alternativeName>
</protein>